<accession>Q4QNR7</accession>
<organism>
    <name type="scientific">Haemophilus influenzae (strain 86-028NP)</name>
    <dbReference type="NCBI Taxonomy" id="281310"/>
    <lineage>
        <taxon>Bacteria</taxon>
        <taxon>Pseudomonadati</taxon>
        <taxon>Pseudomonadota</taxon>
        <taxon>Gammaproteobacteria</taxon>
        <taxon>Pasteurellales</taxon>
        <taxon>Pasteurellaceae</taxon>
        <taxon>Haemophilus</taxon>
    </lineage>
</organism>
<comment type="function">
    <text evidence="1">Catalyzes the transfer of a ribosyl phosphate group from 5-phosphoribose 1-diphosphate to orotate, leading to the formation of orotidine monophosphate (OMP).</text>
</comment>
<comment type="catalytic activity">
    <reaction evidence="1">
        <text>orotidine 5'-phosphate + diphosphate = orotate + 5-phospho-alpha-D-ribose 1-diphosphate</text>
        <dbReference type="Rhea" id="RHEA:10380"/>
        <dbReference type="ChEBI" id="CHEBI:30839"/>
        <dbReference type="ChEBI" id="CHEBI:33019"/>
        <dbReference type="ChEBI" id="CHEBI:57538"/>
        <dbReference type="ChEBI" id="CHEBI:58017"/>
        <dbReference type="EC" id="2.4.2.10"/>
    </reaction>
</comment>
<comment type="cofactor">
    <cofactor evidence="1">
        <name>Mg(2+)</name>
        <dbReference type="ChEBI" id="CHEBI:18420"/>
    </cofactor>
</comment>
<comment type="pathway">
    <text evidence="1">Pyrimidine metabolism; UMP biosynthesis via de novo pathway; UMP from orotate: step 1/2.</text>
</comment>
<comment type="subunit">
    <text evidence="1">Homodimer.</text>
</comment>
<comment type="similarity">
    <text evidence="1">Belongs to the purine/pyrimidine phosphoribosyltransferase family. PyrE subfamily.</text>
</comment>
<keyword id="KW-0328">Glycosyltransferase</keyword>
<keyword id="KW-0460">Magnesium</keyword>
<keyword id="KW-0665">Pyrimidine biosynthesis</keyword>
<keyword id="KW-0808">Transferase</keyword>
<reference key="1">
    <citation type="journal article" date="2005" name="J. Bacteriol.">
        <title>Genomic sequence of an otitis media isolate of nontypeable Haemophilus influenzae: comparative study with H. influenzae serotype d, strain KW20.</title>
        <authorList>
            <person name="Harrison A."/>
            <person name="Dyer D.W."/>
            <person name="Gillaspy A."/>
            <person name="Ray W.C."/>
            <person name="Mungur R."/>
            <person name="Carson M.B."/>
            <person name="Zhong H."/>
            <person name="Gipson J."/>
            <person name="Gipson M."/>
            <person name="Johnson L.S."/>
            <person name="Lewis L."/>
            <person name="Bakaletz L.O."/>
            <person name="Munson R.S. Jr."/>
        </authorList>
    </citation>
    <scope>NUCLEOTIDE SEQUENCE [LARGE SCALE GENOMIC DNA]</scope>
    <source>
        <strain>86-028NP</strain>
    </source>
</reference>
<gene>
    <name evidence="1" type="primary">pyrE</name>
    <name type="ordered locus">NTHI0380</name>
</gene>
<name>PYRE_HAEI8</name>
<proteinExistence type="inferred from homology"/>
<dbReference type="EC" id="2.4.2.10" evidence="1"/>
<dbReference type="EMBL" id="CP000057">
    <property type="protein sequence ID" value="AAX87330.1"/>
    <property type="molecule type" value="Genomic_DNA"/>
</dbReference>
<dbReference type="RefSeq" id="WP_005644452.1">
    <property type="nucleotide sequence ID" value="NC_007146.2"/>
</dbReference>
<dbReference type="SMR" id="Q4QNR7"/>
<dbReference type="GeneID" id="93219214"/>
<dbReference type="KEGG" id="hit:NTHI0380"/>
<dbReference type="HOGENOM" id="CLU_074878_0_1_6"/>
<dbReference type="UniPathway" id="UPA00070">
    <property type="reaction ID" value="UER00119"/>
</dbReference>
<dbReference type="Proteomes" id="UP000002525">
    <property type="component" value="Chromosome"/>
</dbReference>
<dbReference type="GO" id="GO:0005737">
    <property type="term" value="C:cytoplasm"/>
    <property type="evidence" value="ECO:0007669"/>
    <property type="project" value="TreeGrafter"/>
</dbReference>
<dbReference type="GO" id="GO:0000287">
    <property type="term" value="F:magnesium ion binding"/>
    <property type="evidence" value="ECO:0007669"/>
    <property type="project" value="UniProtKB-UniRule"/>
</dbReference>
<dbReference type="GO" id="GO:0004588">
    <property type="term" value="F:orotate phosphoribosyltransferase activity"/>
    <property type="evidence" value="ECO:0007669"/>
    <property type="project" value="UniProtKB-UniRule"/>
</dbReference>
<dbReference type="GO" id="GO:0006207">
    <property type="term" value="P:'de novo' pyrimidine nucleobase biosynthetic process"/>
    <property type="evidence" value="ECO:0007669"/>
    <property type="project" value="TreeGrafter"/>
</dbReference>
<dbReference type="GO" id="GO:0044205">
    <property type="term" value="P:'de novo' UMP biosynthetic process"/>
    <property type="evidence" value="ECO:0007669"/>
    <property type="project" value="UniProtKB-UniRule"/>
</dbReference>
<dbReference type="GO" id="GO:0046132">
    <property type="term" value="P:pyrimidine ribonucleoside biosynthetic process"/>
    <property type="evidence" value="ECO:0007669"/>
    <property type="project" value="TreeGrafter"/>
</dbReference>
<dbReference type="CDD" id="cd06223">
    <property type="entry name" value="PRTases_typeI"/>
    <property type="match status" value="1"/>
</dbReference>
<dbReference type="FunFam" id="3.40.50.2020:FF:000008">
    <property type="entry name" value="Orotate phosphoribosyltransferase"/>
    <property type="match status" value="1"/>
</dbReference>
<dbReference type="Gene3D" id="3.40.50.2020">
    <property type="match status" value="1"/>
</dbReference>
<dbReference type="HAMAP" id="MF_01208">
    <property type="entry name" value="PyrE"/>
    <property type="match status" value="1"/>
</dbReference>
<dbReference type="InterPro" id="IPR023031">
    <property type="entry name" value="OPRT"/>
</dbReference>
<dbReference type="InterPro" id="IPR004467">
    <property type="entry name" value="Or_phspho_trans_dom"/>
</dbReference>
<dbReference type="InterPro" id="IPR000836">
    <property type="entry name" value="PRibTrfase_dom"/>
</dbReference>
<dbReference type="InterPro" id="IPR029057">
    <property type="entry name" value="PRTase-like"/>
</dbReference>
<dbReference type="NCBIfam" id="TIGR00336">
    <property type="entry name" value="pyrE"/>
    <property type="match status" value="1"/>
</dbReference>
<dbReference type="PANTHER" id="PTHR46683">
    <property type="entry name" value="OROTATE PHOSPHORIBOSYLTRANSFERASE 1-RELATED"/>
    <property type="match status" value="1"/>
</dbReference>
<dbReference type="PANTHER" id="PTHR46683:SF1">
    <property type="entry name" value="OROTATE PHOSPHORIBOSYLTRANSFERASE 1-RELATED"/>
    <property type="match status" value="1"/>
</dbReference>
<dbReference type="Pfam" id="PF00156">
    <property type="entry name" value="Pribosyltran"/>
    <property type="match status" value="1"/>
</dbReference>
<dbReference type="SUPFAM" id="SSF53271">
    <property type="entry name" value="PRTase-like"/>
    <property type="match status" value="1"/>
</dbReference>
<dbReference type="PROSITE" id="PS00103">
    <property type="entry name" value="PUR_PYR_PR_TRANSFER"/>
    <property type="match status" value="1"/>
</dbReference>
<evidence type="ECO:0000255" key="1">
    <source>
        <dbReference type="HAMAP-Rule" id="MF_01208"/>
    </source>
</evidence>
<sequence>MEQYKRDFIEFALSRNVLKFGEFTLKSGRKSPYFFNAGLFNTGADLARLGEFYAAAIQASAVDFDVVFGPAYKGIPIGTSVSVALFNRYGIDKPVCFNRKEVKDHGEGGNLIGSPLQGKILLVDDVITAGTAIRESMELISANKAELAAVLIALNRKERGKGELSAIQEVERDYQCQVLSIIDLDDLMQFIEQDPRYSSHLPEMRAYRAEFGV</sequence>
<feature type="chain" id="PRO_1000066233" description="Orotate phosphoribosyltransferase">
    <location>
        <begin position="1"/>
        <end position="213"/>
    </location>
</feature>
<feature type="binding site" description="in other chain" evidence="1">
    <location>
        <position position="26"/>
    </location>
    <ligand>
        <name>5-phospho-alpha-D-ribose 1-diphosphate</name>
        <dbReference type="ChEBI" id="CHEBI:58017"/>
        <note>ligand shared between dimeric partners</note>
    </ligand>
</feature>
<feature type="binding site" evidence="1">
    <location>
        <begin position="34"/>
        <end position="35"/>
    </location>
    <ligand>
        <name>orotate</name>
        <dbReference type="ChEBI" id="CHEBI:30839"/>
    </ligand>
</feature>
<feature type="binding site" description="in other chain" evidence="1">
    <location>
        <begin position="72"/>
        <end position="73"/>
    </location>
    <ligand>
        <name>5-phospho-alpha-D-ribose 1-diphosphate</name>
        <dbReference type="ChEBI" id="CHEBI:58017"/>
        <note>ligand shared between dimeric partners</note>
    </ligand>
</feature>
<feature type="binding site" evidence="1">
    <location>
        <position position="99"/>
    </location>
    <ligand>
        <name>5-phospho-alpha-D-ribose 1-diphosphate</name>
        <dbReference type="ChEBI" id="CHEBI:58017"/>
        <note>ligand shared between dimeric partners</note>
    </ligand>
</feature>
<feature type="binding site" description="in other chain" evidence="1">
    <location>
        <position position="100"/>
    </location>
    <ligand>
        <name>5-phospho-alpha-D-ribose 1-diphosphate</name>
        <dbReference type="ChEBI" id="CHEBI:58017"/>
        <note>ligand shared between dimeric partners</note>
    </ligand>
</feature>
<feature type="binding site" evidence="1">
    <location>
        <position position="103"/>
    </location>
    <ligand>
        <name>5-phospho-alpha-D-ribose 1-diphosphate</name>
        <dbReference type="ChEBI" id="CHEBI:58017"/>
        <note>ligand shared between dimeric partners</note>
    </ligand>
</feature>
<feature type="binding site" evidence="1">
    <location>
        <position position="105"/>
    </location>
    <ligand>
        <name>5-phospho-alpha-D-ribose 1-diphosphate</name>
        <dbReference type="ChEBI" id="CHEBI:58017"/>
        <note>ligand shared between dimeric partners</note>
    </ligand>
</feature>
<feature type="binding site" description="in other chain" evidence="1">
    <location>
        <begin position="124"/>
        <end position="132"/>
    </location>
    <ligand>
        <name>5-phospho-alpha-D-ribose 1-diphosphate</name>
        <dbReference type="ChEBI" id="CHEBI:58017"/>
        <note>ligand shared between dimeric partners</note>
    </ligand>
</feature>
<feature type="binding site" evidence="1">
    <location>
        <position position="128"/>
    </location>
    <ligand>
        <name>orotate</name>
        <dbReference type="ChEBI" id="CHEBI:30839"/>
    </ligand>
</feature>
<feature type="binding site" evidence="1">
    <location>
        <position position="156"/>
    </location>
    <ligand>
        <name>orotate</name>
        <dbReference type="ChEBI" id="CHEBI:30839"/>
    </ligand>
</feature>
<protein>
    <recommendedName>
        <fullName evidence="1">Orotate phosphoribosyltransferase</fullName>
        <shortName evidence="1">OPRT</shortName>
        <shortName evidence="1">OPRTase</shortName>
        <ecNumber evidence="1">2.4.2.10</ecNumber>
    </recommendedName>
</protein>